<evidence type="ECO:0000255" key="1">
    <source>
        <dbReference type="HAMAP-Rule" id="MF_01576"/>
    </source>
</evidence>
<comment type="function">
    <text evidence="1">Catalyzes the oxidation of 5,10-methylenetetrahydrofolate to 5,10-methenyltetrahydrofolate and then the hydrolysis of 5,10-methenyltetrahydrofolate to 10-formyltetrahydrofolate.</text>
</comment>
<comment type="catalytic activity">
    <reaction evidence="1">
        <text>(6R)-5,10-methylene-5,6,7,8-tetrahydrofolate + NADP(+) = (6R)-5,10-methenyltetrahydrofolate + NADPH</text>
        <dbReference type="Rhea" id="RHEA:22812"/>
        <dbReference type="ChEBI" id="CHEBI:15636"/>
        <dbReference type="ChEBI" id="CHEBI:57455"/>
        <dbReference type="ChEBI" id="CHEBI:57783"/>
        <dbReference type="ChEBI" id="CHEBI:58349"/>
        <dbReference type="EC" id="1.5.1.5"/>
    </reaction>
</comment>
<comment type="catalytic activity">
    <reaction evidence="1">
        <text>(6R)-5,10-methenyltetrahydrofolate + H2O = (6R)-10-formyltetrahydrofolate + H(+)</text>
        <dbReference type="Rhea" id="RHEA:23700"/>
        <dbReference type="ChEBI" id="CHEBI:15377"/>
        <dbReference type="ChEBI" id="CHEBI:15378"/>
        <dbReference type="ChEBI" id="CHEBI:57455"/>
        <dbReference type="ChEBI" id="CHEBI:195366"/>
        <dbReference type="EC" id="3.5.4.9"/>
    </reaction>
</comment>
<comment type="pathway">
    <text evidence="1">One-carbon metabolism; tetrahydrofolate interconversion.</text>
</comment>
<comment type="subunit">
    <text evidence="1">Homodimer.</text>
</comment>
<comment type="similarity">
    <text evidence="1">Belongs to the tetrahydrofolate dehydrogenase/cyclohydrolase family.</text>
</comment>
<organism>
    <name type="scientific">Helicobacter pylori (strain J99 / ATCC 700824)</name>
    <name type="common">Campylobacter pylori J99</name>
    <dbReference type="NCBI Taxonomy" id="85963"/>
    <lineage>
        <taxon>Bacteria</taxon>
        <taxon>Pseudomonadati</taxon>
        <taxon>Campylobacterota</taxon>
        <taxon>Epsilonproteobacteria</taxon>
        <taxon>Campylobacterales</taxon>
        <taxon>Helicobacteraceae</taxon>
        <taxon>Helicobacter</taxon>
    </lineage>
</organism>
<protein>
    <recommendedName>
        <fullName evidence="1">Bifunctional protein FolD</fullName>
    </recommendedName>
    <domain>
        <recommendedName>
            <fullName evidence="1">Methylenetetrahydrofolate dehydrogenase</fullName>
            <ecNumber evidence="1">1.5.1.5</ecNumber>
        </recommendedName>
    </domain>
    <domain>
        <recommendedName>
            <fullName evidence="1">Methenyltetrahydrofolate cyclohydrolase</fullName>
            <ecNumber evidence="1">3.5.4.9</ecNumber>
        </recommendedName>
    </domain>
</protein>
<proteinExistence type="inferred from homology"/>
<gene>
    <name evidence="1" type="primary">folD</name>
    <name type="ordered locus">jhp_0524</name>
</gene>
<dbReference type="EC" id="1.5.1.5" evidence="1"/>
<dbReference type="EC" id="3.5.4.9" evidence="1"/>
<dbReference type="EMBL" id="AE001439">
    <property type="protein sequence ID" value="AAD06105.1"/>
    <property type="molecule type" value="Genomic_DNA"/>
</dbReference>
<dbReference type="PIR" id="E71921">
    <property type="entry name" value="E71921"/>
</dbReference>
<dbReference type="RefSeq" id="WP_010882527.1">
    <property type="nucleotide sequence ID" value="NC_000921.1"/>
</dbReference>
<dbReference type="SMR" id="Q9ZLQ4"/>
<dbReference type="KEGG" id="hpj:jhp_0524"/>
<dbReference type="PATRIC" id="fig|85963.30.peg.470"/>
<dbReference type="eggNOG" id="COG0190">
    <property type="taxonomic scope" value="Bacteria"/>
</dbReference>
<dbReference type="UniPathway" id="UPA00193"/>
<dbReference type="Proteomes" id="UP000000804">
    <property type="component" value="Chromosome"/>
</dbReference>
<dbReference type="GO" id="GO:0005829">
    <property type="term" value="C:cytosol"/>
    <property type="evidence" value="ECO:0007669"/>
    <property type="project" value="TreeGrafter"/>
</dbReference>
<dbReference type="GO" id="GO:0004477">
    <property type="term" value="F:methenyltetrahydrofolate cyclohydrolase activity"/>
    <property type="evidence" value="ECO:0007669"/>
    <property type="project" value="UniProtKB-UniRule"/>
</dbReference>
<dbReference type="GO" id="GO:0004488">
    <property type="term" value="F:methylenetetrahydrofolate dehydrogenase (NADP+) activity"/>
    <property type="evidence" value="ECO:0007669"/>
    <property type="project" value="UniProtKB-UniRule"/>
</dbReference>
<dbReference type="GO" id="GO:0000105">
    <property type="term" value="P:L-histidine biosynthetic process"/>
    <property type="evidence" value="ECO:0007669"/>
    <property type="project" value="UniProtKB-KW"/>
</dbReference>
<dbReference type="GO" id="GO:0009086">
    <property type="term" value="P:methionine biosynthetic process"/>
    <property type="evidence" value="ECO:0007669"/>
    <property type="project" value="UniProtKB-KW"/>
</dbReference>
<dbReference type="GO" id="GO:0006164">
    <property type="term" value="P:purine nucleotide biosynthetic process"/>
    <property type="evidence" value="ECO:0007669"/>
    <property type="project" value="UniProtKB-KW"/>
</dbReference>
<dbReference type="GO" id="GO:0035999">
    <property type="term" value="P:tetrahydrofolate interconversion"/>
    <property type="evidence" value="ECO:0007669"/>
    <property type="project" value="UniProtKB-UniRule"/>
</dbReference>
<dbReference type="CDD" id="cd01080">
    <property type="entry name" value="NAD_bind_m-THF_DH_Cyclohyd"/>
    <property type="match status" value="1"/>
</dbReference>
<dbReference type="FunFam" id="3.40.50.720:FF:000094">
    <property type="entry name" value="Bifunctional protein FolD"/>
    <property type="match status" value="1"/>
</dbReference>
<dbReference type="FunFam" id="3.40.50.10860:FF:000005">
    <property type="entry name" value="C-1-tetrahydrofolate synthase, cytoplasmic, putative"/>
    <property type="match status" value="1"/>
</dbReference>
<dbReference type="Gene3D" id="3.40.50.10860">
    <property type="entry name" value="Leucine Dehydrogenase, chain A, domain 1"/>
    <property type="match status" value="1"/>
</dbReference>
<dbReference type="Gene3D" id="3.40.50.720">
    <property type="entry name" value="NAD(P)-binding Rossmann-like Domain"/>
    <property type="match status" value="1"/>
</dbReference>
<dbReference type="HAMAP" id="MF_01576">
    <property type="entry name" value="THF_DHG_CYH"/>
    <property type="match status" value="1"/>
</dbReference>
<dbReference type="InterPro" id="IPR046346">
    <property type="entry name" value="Aminoacid_DH-like_N_sf"/>
</dbReference>
<dbReference type="InterPro" id="IPR036291">
    <property type="entry name" value="NAD(P)-bd_dom_sf"/>
</dbReference>
<dbReference type="InterPro" id="IPR000672">
    <property type="entry name" value="THF_DH/CycHdrlase"/>
</dbReference>
<dbReference type="InterPro" id="IPR020630">
    <property type="entry name" value="THF_DH/CycHdrlase_cat_dom"/>
</dbReference>
<dbReference type="InterPro" id="IPR020867">
    <property type="entry name" value="THF_DH/CycHdrlase_CS"/>
</dbReference>
<dbReference type="InterPro" id="IPR020631">
    <property type="entry name" value="THF_DH/CycHdrlase_NAD-bd_dom"/>
</dbReference>
<dbReference type="NCBIfam" id="NF008058">
    <property type="entry name" value="PRK10792.1"/>
    <property type="match status" value="1"/>
</dbReference>
<dbReference type="NCBIfam" id="NF010787">
    <property type="entry name" value="PRK14191.1"/>
    <property type="match status" value="1"/>
</dbReference>
<dbReference type="PANTHER" id="PTHR48099:SF5">
    <property type="entry name" value="C-1-TETRAHYDROFOLATE SYNTHASE, CYTOPLASMIC"/>
    <property type="match status" value="1"/>
</dbReference>
<dbReference type="PANTHER" id="PTHR48099">
    <property type="entry name" value="C-1-TETRAHYDROFOLATE SYNTHASE, CYTOPLASMIC-RELATED"/>
    <property type="match status" value="1"/>
</dbReference>
<dbReference type="Pfam" id="PF00763">
    <property type="entry name" value="THF_DHG_CYH"/>
    <property type="match status" value="1"/>
</dbReference>
<dbReference type="Pfam" id="PF02882">
    <property type="entry name" value="THF_DHG_CYH_C"/>
    <property type="match status" value="1"/>
</dbReference>
<dbReference type="PRINTS" id="PR00085">
    <property type="entry name" value="THFDHDRGNASE"/>
</dbReference>
<dbReference type="SUPFAM" id="SSF53223">
    <property type="entry name" value="Aminoacid dehydrogenase-like, N-terminal domain"/>
    <property type="match status" value="1"/>
</dbReference>
<dbReference type="SUPFAM" id="SSF51735">
    <property type="entry name" value="NAD(P)-binding Rossmann-fold domains"/>
    <property type="match status" value="1"/>
</dbReference>
<dbReference type="PROSITE" id="PS00766">
    <property type="entry name" value="THF_DHG_CYH_1"/>
    <property type="match status" value="1"/>
</dbReference>
<dbReference type="PROSITE" id="PS00767">
    <property type="entry name" value="THF_DHG_CYH_2"/>
    <property type="match status" value="1"/>
</dbReference>
<feature type="chain" id="PRO_0000199309" description="Bifunctional protein FolD">
    <location>
        <begin position="1"/>
        <end position="290"/>
    </location>
</feature>
<feature type="binding site" evidence="1">
    <location>
        <begin position="169"/>
        <end position="171"/>
    </location>
    <ligand>
        <name>NADP(+)</name>
        <dbReference type="ChEBI" id="CHEBI:58349"/>
    </ligand>
</feature>
<feature type="binding site" evidence="1">
    <location>
        <position position="194"/>
    </location>
    <ligand>
        <name>NADP(+)</name>
        <dbReference type="ChEBI" id="CHEBI:58349"/>
    </ligand>
</feature>
<feature type="binding site" evidence="1">
    <location>
        <position position="235"/>
    </location>
    <ligand>
        <name>NADP(+)</name>
        <dbReference type="ChEBI" id="CHEBI:58349"/>
    </ligand>
</feature>
<reference key="1">
    <citation type="journal article" date="1999" name="Nature">
        <title>Genomic sequence comparison of two unrelated isolates of the human gastric pathogen Helicobacter pylori.</title>
        <authorList>
            <person name="Alm R.A."/>
            <person name="Ling L.-S.L."/>
            <person name="Moir D.T."/>
            <person name="King B.L."/>
            <person name="Brown E.D."/>
            <person name="Doig P.C."/>
            <person name="Smith D.R."/>
            <person name="Noonan B."/>
            <person name="Guild B.C."/>
            <person name="deJonge B.L."/>
            <person name="Carmel G."/>
            <person name="Tummino P.J."/>
            <person name="Caruso A."/>
            <person name="Uria-Nickelsen M."/>
            <person name="Mills D.M."/>
            <person name="Ives C."/>
            <person name="Gibson R."/>
            <person name="Merberg D."/>
            <person name="Mills S.D."/>
            <person name="Jiang Q."/>
            <person name="Taylor D.E."/>
            <person name="Vovis G.F."/>
            <person name="Trust T.J."/>
        </authorList>
    </citation>
    <scope>NUCLEOTIDE SEQUENCE [LARGE SCALE GENOMIC DNA]</scope>
    <source>
        <strain>J99 / ATCC 700824</strain>
    </source>
</reference>
<accession>Q9ZLQ4</accession>
<sequence>MPNRGVVLLDGQALAYNIEKDLKNKIQIITAQTHKRPKLAVILVGKDPASITYVNMKIKACQRVGMDFDLKTLKENITEAELLSLIKDYNTDQNISGILVQLPLPRSIDTKMILEAIDPNKDVDGFHPLNIGKLCTQKESFLPATPMGVMRLLEHYHIEIKGKDVAIIGASNIIGKPLSMLMLNAGASVSVCHILTKDISFYTKNADIVCVGVGKPDLIKASMLKKGAVVVDIGINHLNDGRIVGDVDFINAQKIAGFITPVPKGVGPMTIVSLLENTLIAFEKQQRKGF</sequence>
<keyword id="KW-0028">Amino-acid biosynthesis</keyword>
<keyword id="KW-0368">Histidine biosynthesis</keyword>
<keyword id="KW-0378">Hydrolase</keyword>
<keyword id="KW-0486">Methionine biosynthesis</keyword>
<keyword id="KW-0511">Multifunctional enzyme</keyword>
<keyword id="KW-0521">NADP</keyword>
<keyword id="KW-0554">One-carbon metabolism</keyword>
<keyword id="KW-0560">Oxidoreductase</keyword>
<keyword id="KW-0658">Purine biosynthesis</keyword>
<name>FOLD_HELPJ</name>